<feature type="chain" id="PRO_0000298453" description="Acetyltransferase YPDSF_2136">
    <location>
        <begin position="1"/>
        <end position="141"/>
    </location>
</feature>
<feature type="domain" description="N-acetyltransferase" evidence="1">
    <location>
        <begin position="1"/>
        <end position="141"/>
    </location>
</feature>
<sequence>MEIRIFQQDDFEEVILLWEHCDLLRPWNDPEMDIERKLNHDPELFLVAEVNGTIVGSVMGGYDGHRGSAYYLGVHPDYRGRGFANALISRLEKKLIARGCPKLNIMVREDNDAVIGMYEKLDYETQDTIMLGKRLIVDQEY</sequence>
<gene>
    <name type="ordered locus">YPDSF_2136</name>
</gene>
<name>Y2136_YERPP</name>
<accession>A4TMK1</accession>
<dbReference type="EC" id="2.3.1.-" evidence="1"/>
<dbReference type="EMBL" id="CP000668">
    <property type="protein sequence ID" value="ABP40513.1"/>
    <property type="molecule type" value="Genomic_DNA"/>
</dbReference>
<dbReference type="RefSeq" id="WP_002208525.1">
    <property type="nucleotide sequence ID" value="NZ_CP009715.1"/>
</dbReference>
<dbReference type="SMR" id="A4TMK1"/>
<dbReference type="KEGG" id="ypp:YPDSF_2136"/>
<dbReference type="PATRIC" id="fig|386656.14.peg.3614"/>
<dbReference type="GO" id="GO:0016747">
    <property type="term" value="F:acyltransferase activity, transferring groups other than amino-acyl groups"/>
    <property type="evidence" value="ECO:0007669"/>
    <property type="project" value="UniProtKB-UniRule"/>
</dbReference>
<dbReference type="CDD" id="cd04301">
    <property type="entry name" value="NAT_SF"/>
    <property type="match status" value="1"/>
</dbReference>
<dbReference type="Gene3D" id="3.40.630.30">
    <property type="match status" value="1"/>
</dbReference>
<dbReference type="HAMAP" id="MF_01127">
    <property type="entry name" value="Acetyltransf_YpeA"/>
    <property type="match status" value="1"/>
</dbReference>
<dbReference type="InterPro" id="IPR023072">
    <property type="entry name" value="Acetyltransferase_YpeA"/>
</dbReference>
<dbReference type="InterPro" id="IPR016181">
    <property type="entry name" value="Acyl_CoA_acyltransferase"/>
</dbReference>
<dbReference type="InterPro" id="IPR000182">
    <property type="entry name" value="GNAT_dom"/>
</dbReference>
<dbReference type="NCBIfam" id="NF002959">
    <property type="entry name" value="PRK03624.1"/>
    <property type="match status" value="1"/>
</dbReference>
<dbReference type="PANTHER" id="PTHR43072:SF51">
    <property type="entry name" value="ABC SUPERFAMILY TRANSPORT PROTEIN"/>
    <property type="match status" value="1"/>
</dbReference>
<dbReference type="PANTHER" id="PTHR43072">
    <property type="entry name" value="N-ACETYLTRANSFERASE"/>
    <property type="match status" value="1"/>
</dbReference>
<dbReference type="Pfam" id="PF00583">
    <property type="entry name" value="Acetyltransf_1"/>
    <property type="match status" value="1"/>
</dbReference>
<dbReference type="SUPFAM" id="SSF55729">
    <property type="entry name" value="Acyl-CoA N-acyltransferases (Nat)"/>
    <property type="match status" value="1"/>
</dbReference>
<dbReference type="PROSITE" id="PS51186">
    <property type="entry name" value="GNAT"/>
    <property type="match status" value="1"/>
</dbReference>
<comment type="similarity">
    <text evidence="1">Belongs to the acetyltransferase family. YpeA subfamily.</text>
</comment>
<keyword id="KW-0012">Acyltransferase</keyword>
<keyword id="KW-0808">Transferase</keyword>
<reference key="1">
    <citation type="submission" date="2007-02" db="EMBL/GenBank/DDBJ databases">
        <title>Complete sequence of chromosome of Yersinia pestis Pestoides F.</title>
        <authorList>
            <consortium name="US DOE Joint Genome Institute"/>
            <person name="Copeland A."/>
            <person name="Lucas S."/>
            <person name="Lapidus A."/>
            <person name="Barry K."/>
            <person name="Detter J.C."/>
            <person name="Glavina del Rio T."/>
            <person name="Hammon N."/>
            <person name="Israni S."/>
            <person name="Dalin E."/>
            <person name="Tice H."/>
            <person name="Pitluck S."/>
            <person name="Di Bartolo G."/>
            <person name="Chain P."/>
            <person name="Malfatti S."/>
            <person name="Shin M."/>
            <person name="Vergez L."/>
            <person name="Schmutz J."/>
            <person name="Larimer F."/>
            <person name="Land M."/>
            <person name="Hauser L."/>
            <person name="Worsham P."/>
            <person name="Chu M."/>
            <person name="Bearden S."/>
            <person name="Garcia E."/>
            <person name="Richardson P."/>
        </authorList>
    </citation>
    <scope>NUCLEOTIDE SEQUENCE [LARGE SCALE GENOMIC DNA]</scope>
    <source>
        <strain>Pestoides F</strain>
    </source>
</reference>
<protein>
    <recommendedName>
        <fullName evidence="1">Acetyltransferase YPDSF_2136</fullName>
        <ecNumber evidence="1">2.3.1.-</ecNumber>
    </recommendedName>
</protein>
<proteinExistence type="inferred from homology"/>
<evidence type="ECO:0000255" key="1">
    <source>
        <dbReference type="HAMAP-Rule" id="MF_01127"/>
    </source>
</evidence>
<organism>
    <name type="scientific">Yersinia pestis (strain Pestoides F)</name>
    <dbReference type="NCBI Taxonomy" id="386656"/>
    <lineage>
        <taxon>Bacteria</taxon>
        <taxon>Pseudomonadati</taxon>
        <taxon>Pseudomonadota</taxon>
        <taxon>Gammaproteobacteria</taxon>
        <taxon>Enterobacterales</taxon>
        <taxon>Yersiniaceae</taxon>
        <taxon>Yersinia</taxon>
    </lineage>
</organism>